<evidence type="ECO:0000250" key="1"/>
<evidence type="ECO:0000255" key="2">
    <source>
        <dbReference type="HAMAP-Rule" id="MF_01303"/>
    </source>
</evidence>
<evidence type="ECO:0000305" key="3"/>
<keyword id="KW-0004">4Fe-4S</keyword>
<keyword id="KW-0249">Electron transport</keyword>
<keyword id="KW-0408">Iron</keyword>
<keyword id="KW-0411">Iron-sulfur</keyword>
<keyword id="KW-0472">Membrane</keyword>
<keyword id="KW-0479">Metal-binding</keyword>
<keyword id="KW-0560">Oxidoreductase</keyword>
<keyword id="KW-0602">Photosynthesis</keyword>
<keyword id="KW-0603">Photosystem I</keyword>
<keyword id="KW-0934">Plastid</keyword>
<keyword id="KW-0677">Repeat</keyword>
<keyword id="KW-0793">Thylakoid</keyword>
<keyword id="KW-0813">Transport</keyword>
<proteinExistence type="inferred from homology"/>
<reference key="1">
    <citation type="journal article" date="2007" name="BMC Plant Biol.">
        <title>Complete DNA sequences of the plastid genomes of two parasitic flowering plant species, Cuscuta reflexa and Cuscuta gronovii.</title>
        <authorList>
            <person name="Funk H.T."/>
            <person name="Berg S."/>
            <person name="Krupinska K."/>
            <person name="Maier U.-G."/>
            <person name="Krause K."/>
        </authorList>
    </citation>
    <scope>NUCLEOTIDE SEQUENCE [LARGE SCALE GENOMIC DNA]</scope>
</reference>
<accession>A7M942</accession>
<name>PSAC_CUSGR</name>
<geneLocation type="plastid"/>
<organism>
    <name type="scientific">Cuscuta gronovii</name>
    <name type="common">Common dodder</name>
    <name type="synonym">Epithymum gronovii</name>
    <dbReference type="NCBI Taxonomy" id="35886"/>
    <lineage>
        <taxon>Eukaryota</taxon>
        <taxon>Viridiplantae</taxon>
        <taxon>Streptophyta</taxon>
        <taxon>Embryophyta</taxon>
        <taxon>Tracheophyta</taxon>
        <taxon>Spermatophyta</taxon>
        <taxon>Magnoliopsida</taxon>
        <taxon>eudicotyledons</taxon>
        <taxon>Gunneridae</taxon>
        <taxon>Pentapetalae</taxon>
        <taxon>asterids</taxon>
        <taxon>lamiids</taxon>
        <taxon>Solanales</taxon>
        <taxon>Convolvulaceae</taxon>
        <taxon>Cuscuteae</taxon>
        <taxon>Cuscuta</taxon>
        <taxon>Cuscuta subgen. Grammica</taxon>
        <taxon>Cuscuta sect. Oxycarpae</taxon>
    </lineage>
</organism>
<dbReference type="EC" id="1.97.1.12" evidence="2"/>
<dbReference type="EMBL" id="AM711639">
    <property type="protein sequence ID" value="CAM98370.1"/>
    <property type="molecule type" value="Genomic_DNA"/>
</dbReference>
<dbReference type="RefSeq" id="YP_001430083.1">
    <property type="nucleotide sequence ID" value="NC_009765.1"/>
</dbReference>
<dbReference type="SMR" id="A7M942"/>
<dbReference type="GeneID" id="5536730"/>
<dbReference type="GO" id="GO:0009534">
    <property type="term" value="C:chloroplast thylakoid"/>
    <property type="evidence" value="ECO:0007669"/>
    <property type="project" value="TreeGrafter"/>
</dbReference>
<dbReference type="GO" id="GO:0009522">
    <property type="term" value="C:photosystem I"/>
    <property type="evidence" value="ECO:0007669"/>
    <property type="project" value="UniProtKB-KW"/>
</dbReference>
<dbReference type="GO" id="GO:0055035">
    <property type="term" value="C:plastid thylakoid membrane"/>
    <property type="evidence" value="ECO:0007669"/>
    <property type="project" value="UniProtKB-SubCell"/>
</dbReference>
<dbReference type="GO" id="GO:0051539">
    <property type="term" value="F:4 iron, 4 sulfur cluster binding"/>
    <property type="evidence" value="ECO:0007669"/>
    <property type="project" value="UniProtKB-KW"/>
</dbReference>
<dbReference type="GO" id="GO:0009055">
    <property type="term" value="F:electron transfer activity"/>
    <property type="evidence" value="ECO:0007669"/>
    <property type="project" value="UniProtKB-UniRule"/>
</dbReference>
<dbReference type="GO" id="GO:0046872">
    <property type="term" value="F:metal ion binding"/>
    <property type="evidence" value="ECO:0007669"/>
    <property type="project" value="UniProtKB-KW"/>
</dbReference>
<dbReference type="GO" id="GO:0016491">
    <property type="term" value="F:oxidoreductase activity"/>
    <property type="evidence" value="ECO:0007669"/>
    <property type="project" value="UniProtKB-KW"/>
</dbReference>
<dbReference type="GO" id="GO:0009773">
    <property type="term" value="P:photosynthetic electron transport in photosystem I"/>
    <property type="evidence" value="ECO:0007669"/>
    <property type="project" value="InterPro"/>
</dbReference>
<dbReference type="FunFam" id="3.30.70.20:FF:000001">
    <property type="entry name" value="Photosystem I iron-sulfur center"/>
    <property type="match status" value="1"/>
</dbReference>
<dbReference type="Gene3D" id="3.30.70.20">
    <property type="match status" value="1"/>
</dbReference>
<dbReference type="HAMAP" id="MF_01303">
    <property type="entry name" value="PSI_PsaC"/>
    <property type="match status" value="1"/>
</dbReference>
<dbReference type="InterPro" id="IPR017896">
    <property type="entry name" value="4Fe4S_Fe-S-bd"/>
</dbReference>
<dbReference type="InterPro" id="IPR017900">
    <property type="entry name" value="4Fe4S_Fe_S_CS"/>
</dbReference>
<dbReference type="InterPro" id="IPR050157">
    <property type="entry name" value="PSI_iron-sulfur_center"/>
</dbReference>
<dbReference type="InterPro" id="IPR017491">
    <property type="entry name" value="PSI_PsaC"/>
</dbReference>
<dbReference type="NCBIfam" id="TIGR03048">
    <property type="entry name" value="PS_I_psaC"/>
    <property type="match status" value="1"/>
</dbReference>
<dbReference type="PANTHER" id="PTHR24960:SF79">
    <property type="entry name" value="PHOTOSYSTEM I IRON-SULFUR CENTER"/>
    <property type="match status" value="1"/>
</dbReference>
<dbReference type="PANTHER" id="PTHR24960">
    <property type="entry name" value="PHOTOSYSTEM I IRON-SULFUR CENTER-RELATED"/>
    <property type="match status" value="1"/>
</dbReference>
<dbReference type="Pfam" id="PF14697">
    <property type="entry name" value="Fer4_21"/>
    <property type="match status" value="1"/>
</dbReference>
<dbReference type="SUPFAM" id="SSF54862">
    <property type="entry name" value="4Fe-4S ferredoxins"/>
    <property type="match status" value="1"/>
</dbReference>
<dbReference type="PROSITE" id="PS00198">
    <property type="entry name" value="4FE4S_FER_1"/>
    <property type="match status" value="2"/>
</dbReference>
<dbReference type="PROSITE" id="PS51379">
    <property type="entry name" value="4FE4S_FER_2"/>
    <property type="match status" value="2"/>
</dbReference>
<sequence length="81" mass="8843">MSHSVKIYDTCIGCTQCVRACPTDVLEMIPWDGCKAKQIASAPRTEDCVGCKRCESACPTDFLSVRVYLGAETTRSMGLAY</sequence>
<gene>
    <name evidence="2" type="primary">psaC</name>
</gene>
<comment type="function">
    <text evidence="2">Apoprotein for the two 4Fe-4S centers FA and FB of photosystem I (PSI); essential for photochemical activity. FB is the terminal electron acceptor of PSI, donating electrons to ferredoxin. The C-terminus interacts with PsaA/B/D and helps assemble the protein into the PSI complex. Required for binding of PsaD and PsaE to PSI. PSI is a plastocyanin-ferredoxin oxidoreductase, converting photonic excitation into a charge separation, which transfers an electron from the donor P700 chlorophyll pair to the spectroscopically characterized acceptors A0, A1, FX, FA and FB in turn.</text>
</comment>
<comment type="catalytic activity">
    <reaction evidence="2">
        <text>reduced [plastocyanin] + hnu + oxidized [2Fe-2S]-[ferredoxin] = oxidized [plastocyanin] + reduced [2Fe-2S]-[ferredoxin]</text>
        <dbReference type="Rhea" id="RHEA:30407"/>
        <dbReference type="Rhea" id="RHEA-COMP:10000"/>
        <dbReference type="Rhea" id="RHEA-COMP:10001"/>
        <dbReference type="Rhea" id="RHEA-COMP:10039"/>
        <dbReference type="Rhea" id="RHEA-COMP:10040"/>
        <dbReference type="ChEBI" id="CHEBI:29036"/>
        <dbReference type="ChEBI" id="CHEBI:30212"/>
        <dbReference type="ChEBI" id="CHEBI:33737"/>
        <dbReference type="ChEBI" id="CHEBI:33738"/>
        <dbReference type="ChEBI" id="CHEBI:49552"/>
        <dbReference type="EC" id="1.97.1.12"/>
    </reaction>
</comment>
<comment type="cofactor">
    <cofactor evidence="2">
        <name>[4Fe-4S] cluster</name>
        <dbReference type="ChEBI" id="CHEBI:49883"/>
    </cofactor>
    <text evidence="2">Binds 2 [4Fe-4S] clusters. Cluster 2 is most probably the spectroscopically characterized electron acceptor FA and cluster 1 is most probably FB.</text>
</comment>
<comment type="subunit">
    <text evidence="2">The eukaryotic PSI reaction center is composed of at least 11 subunits.</text>
</comment>
<comment type="subcellular location">
    <subcellularLocation>
        <location evidence="1">Plastid thylakoid membrane</location>
        <topology evidence="2">Peripheral membrane protein</topology>
        <orientation evidence="2">Stromal side</orientation>
    </subcellularLocation>
</comment>
<comment type="caution">
    <text evidence="3">Young tissue from this organism is photosynthetic and contains some thylakoids, although the photosynthetic activity does not exceed the light compensation point.</text>
</comment>
<protein>
    <recommendedName>
        <fullName evidence="2">Photosystem I iron-sulfur center</fullName>
        <ecNumber evidence="2">1.97.1.12</ecNumber>
    </recommendedName>
    <alternativeName>
        <fullName evidence="2">9 kDa polypeptide</fullName>
    </alternativeName>
    <alternativeName>
        <fullName evidence="2">PSI-C</fullName>
    </alternativeName>
    <alternativeName>
        <fullName evidence="2">Photosystem I subunit VII</fullName>
    </alternativeName>
    <alternativeName>
        <fullName evidence="2">PsaC</fullName>
    </alternativeName>
</protein>
<feature type="chain" id="PRO_0000322036" description="Photosystem I iron-sulfur center">
    <location>
        <begin position="1"/>
        <end position="81"/>
    </location>
</feature>
<feature type="domain" description="4Fe-4S ferredoxin-type 1" evidence="2">
    <location>
        <begin position="2"/>
        <end position="31"/>
    </location>
</feature>
<feature type="domain" description="4Fe-4S ferredoxin-type 2" evidence="2">
    <location>
        <begin position="39"/>
        <end position="68"/>
    </location>
</feature>
<feature type="binding site" evidence="2">
    <location>
        <position position="11"/>
    </location>
    <ligand>
        <name>[4Fe-4S] cluster</name>
        <dbReference type="ChEBI" id="CHEBI:49883"/>
        <label>1</label>
    </ligand>
</feature>
<feature type="binding site" evidence="2">
    <location>
        <position position="14"/>
    </location>
    <ligand>
        <name>[4Fe-4S] cluster</name>
        <dbReference type="ChEBI" id="CHEBI:49883"/>
        <label>1</label>
    </ligand>
</feature>
<feature type="binding site" evidence="2">
    <location>
        <position position="17"/>
    </location>
    <ligand>
        <name>[4Fe-4S] cluster</name>
        <dbReference type="ChEBI" id="CHEBI:49883"/>
        <label>1</label>
    </ligand>
</feature>
<feature type="binding site" evidence="2">
    <location>
        <position position="21"/>
    </location>
    <ligand>
        <name>[4Fe-4S] cluster</name>
        <dbReference type="ChEBI" id="CHEBI:49883"/>
        <label>2</label>
    </ligand>
</feature>
<feature type="binding site" evidence="2">
    <location>
        <position position="48"/>
    </location>
    <ligand>
        <name>[4Fe-4S] cluster</name>
        <dbReference type="ChEBI" id="CHEBI:49883"/>
        <label>2</label>
    </ligand>
</feature>
<feature type="binding site" evidence="2">
    <location>
        <position position="51"/>
    </location>
    <ligand>
        <name>[4Fe-4S] cluster</name>
        <dbReference type="ChEBI" id="CHEBI:49883"/>
        <label>2</label>
    </ligand>
</feature>
<feature type="binding site" evidence="2">
    <location>
        <position position="54"/>
    </location>
    <ligand>
        <name>[4Fe-4S] cluster</name>
        <dbReference type="ChEBI" id="CHEBI:49883"/>
        <label>2</label>
    </ligand>
</feature>
<feature type="binding site" evidence="2">
    <location>
        <position position="58"/>
    </location>
    <ligand>
        <name>[4Fe-4S] cluster</name>
        <dbReference type="ChEBI" id="CHEBI:49883"/>
        <label>1</label>
    </ligand>
</feature>